<keyword id="KW-0131">Cell cycle</keyword>
<keyword id="KW-0132">Cell division</keyword>
<keyword id="KW-0574">Periplasm</keyword>
<keyword id="KW-0732">Signal</keyword>
<gene>
    <name evidence="1" type="primary">tolB</name>
    <name type="ordered locus">Shewmr4_2368</name>
</gene>
<proteinExistence type="inferred from homology"/>
<sequence>MKILAKWLALAVLLCTMPAKAALDIVITEGVDAARPIAVMPFQWQGAGAPPQAIADVVMSDLIRSGTFKPLDELGLPQRGIGALAQFDASAWANVGAEAVVVGSVKPYGTDQFLVSFDLIDLVKAQNQALKGPTSATEFLMDSRQTVISAAQFRQYGHRISDIVYEKLTGIRGAFLTRISYVVVNHSQKAAYSLMIADYDGYNEQMLLRSPEPLMSPSWSPDGRRLAYVSFENKKAEIFVQDLYTQVRTKVSSFPGINGAPTFSPDGKSLAVTLSKDGQPEIYVIDIATKAAKRITNHYSIDTEPSWYPDGKSLLFTSERGGRPQLYRVDLNSGKVTRETFEGEWNLGGSITPDGRSMIFVNRTNGKFNIARMDLSTRFMQVLTSTRLDESPSVAPNGTMVIYGTTYQGKQVLAAVSTDGRFKARLPVGQGEVKSPSWSPFL</sequence>
<reference key="1">
    <citation type="submission" date="2006-08" db="EMBL/GenBank/DDBJ databases">
        <title>Complete sequence of Shewanella sp. MR-4.</title>
        <authorList>
            <consortium name="US DOE Joint Genome Institute"/>
            <person name="Copeland A."/>
            <person name="Lucas S."/>
            <person name="Lapidus A."/>
            <person name="Barry K."/>
            <person name="Detter J.C."/>
            <person name="Glavina del Rio T."/>
            <person name="Hammon N."/>
            <person name="Israni S."/>
            <person name="Dalin E."/>
            <person name="Tice H."/>
            <person name="Pitluck S."/>
            <person name="Kiss H."/>
            <person name="Brettin T."/>
            <person name="Bruce D."/>
            <person name="Han C."/>
            <person name="Tapia R."/>
            <person name="Gilna P."/>
            <person name="Schmutz J."/>
            <person name="Larimer F."/>
            <person name="Land M."/>
            <person name="Hauser L."/>
            <person name="Kyrpides N."/>
            <person name="Mikhailova N."/>
            <person name="Nealson K."/>
            <person name="Konstantinidis K."/>
            <person name="Klappenbach J."/>
            <person name="Tiedje J."/>
            <person name="Richardson P."/>
        </authorList>
    </citation>
    <scope>NUCLEOTIDE SEQUENCE [LARGE SCALE GENOMIC DNA]</scope>
    <source>
        <strain>MR-4</strain>
    </source>
</reference>
<dbReference type="EMBL" id="CP000446">
    <property type="protein sequence ID" value="ABI39439.1"/>
    <property type="molecule type" value="Genomic_DNA"/>
</dbReference>
<dbReference type="RefSeq" id="WP_011623128.1">
    <property type="nucleotide sequence ID" value="NC_008321.1"/>
</dbReference>
<dbReference type="SMR" id="Q0HHM8"/>
<dbReference type="KEGG" id="she:Shewmr4_2368"/>
<dbReference type="HOGENOM" id="CLU_047123_0_0_6"/>
<dbReference type="GO" id="GO:0042597">
    <property type="term" value="C:periplasmic space"/>
    <property type="evidence" value="ECO:0007669"/>
    <property type="project" value="UniProtKB-SubCell"/>
</dbReference>
<dbReference type="GO" id="GO:0051301">
    <property type="term" value="P:cell division"/>
    <property type="evidence" value="ECO:0007669"/>
    <property type="project" value="UniProtKB-UniRule"/>
</dbReference>
<dbReference type="GO" id="GO:0017038">
    <property type="term" value="P:protein import"/>
    <property type="evidence" value="ECO:0007669"/>
    <property type="project" value="InterPro"/>
</dbReference>
<dbReference type="Gene3D" id="2.120.10.30">
    <property type="entry name" value="TolB, C-terminal domain"/>
    <property type="match status" value="1"/>
</dbReference>
<dbReference type="Gene3D" id="3.40.50.10070">
    <property type="entry name" value="TolB, N-terminal domain"/>
    <property type="match status" value="1"/>
</dbReference>
<dbReference type="HAMAP" id="MF_00671">
    <property type="entry name" value="TolB"/>
    <property type="match status" value="1"/>
</dbReference>
<dbReference type="InterPro" id="IPR011042">
    <property type="entry name" value="6-blade_b-propeller_TolB-like"/>
</dbReference>
<dbReference type="InterPro" id="IPR011659">
    <property type="entry name" value="PD40"/>
</dbReference>
<dbReference type="InterPro" id="IPR014167">
    <property type="entry name" value="Tol-Pal_TolB"/>
</dbReference>
<dbReference type="InterPro" id="IPR007195">
    <property type="entry name" value="TolB_N"/>
</dbReference>
<dbReference type="NCBIfam" id="TIGR02800">
    <property type="entry name" value="propeller_TolB"/>
    <property type="match status" value="1"/>
</dbReference>
<dbReference type="PANTHER" id="PTHR36842:SF1">
    <property type="entry name" value="PROTEIN TOLB"/>
    <property type="match status" value="1"/>
</dbReference>
<dbReference type="PANTHER" id="PTHR36842">
    <property type="entry name" value="PROTEIN TOLB HOMOLOG"/>
    <property type="match status" value="1"/>
</dbReference>
<dbReference type="Pfam" id="PF07676">
    <property type="entry name" value="PD40"/>
    <property type="match status" value="4"/>
</dbReference>
<dbReference type="Pfam" id="PF04052">
    <property type="entry name" value="TolB_N"/>
    <property type="match status" value="1"/>
</dbReference>
<dbReference type="SUPFAM" id="SSF52964">
    <property type="entry name" value="TolB, N-terminal domain"/>
    <property type="match status" value="1"/>
</dbReference>
<dbReference type="SUPFAM" id="SSF69304">
    <property type="entry name" value="Tricorn protease N-terminal domain"/>
    <property type="match status" value="1"/>
</dbReference>
<feature type="signal peptide" evidence="1">
    <location>
        <begin position="1"/>
        <end position="21"/>
    </location>
</feature>
<feature type="chain" id="PRO_5000129935" description="Tol-Pal system protein TolB" evidence="1">
    <location>
        <begin position="22"/>
        <end position="442"/>
    </location>
</feature>
<comment type="function">
    <text evidence="1">Part of the Tol-Pal system, which plays a role in outer membrane invagination during cell division and is important for maintaining outer membrane integrity.</text>
</comment>
<comment type="subunit">
    <text evidence="1">The Tol-Pal system is composed of five core proteins: the inner membrane proteins TolA, TolQ and TolR, the periplasmic protein TolB and the outer membrane protein Pal. They form a network linking the inner and outer membranes and the peptidoglycan layer.</text>
</comment>
<comment type="subcellular location">
    <subcellularLocation>
        <location evidence="1">Periplasm</location>
    </subcellularLocation>
</comment>
<comment type="similarity">
    <text evidence="1">Belongs to the TolB family.</text>
</comment>
<evidence type="ECO:0000255" key="1">
    <source>
        <dbReference type="HAMAP-Rule" id="MF_00671"/>
    </source>
</evidence>
<name>TOLB_SHESM</name>
<accession>Q0HHM8</accession>
<organism>
    <name type="scientific">Shewanella sp. (strain MR-4)</name>
    <dbReference type="NCBI Taxonomy" id="60480"/>
    <lineage>
        <taxon>Bacteria</taxon>
        <taxon>Pseudomonadati</taxon>
        <taxon>Pseudomonadota</taxon>
        <taxon>Gammaproteobacteria</taxon>
        <taxon>Alteromonadales</taxon>
        <taxon>Shewanellaceae</taxon>
        <taxon>Shewanella</taxon>
    </lineage>
</organism>
<protein>
    <recommendedName>
        <fullName evidence="1">Tol-Pal system protein TolB</fullName>
    </recommendedName>
</protein>